<feature type="chain" id="PRO_0000181190" description="Large ribosomal subunit protein bL27">
    <location>
        <begin position="1"/>
        <end position="88"/>
    </location>
</feature>
<feature type="region of interest" description="Disordered" evidence="2">
    <location>
        <begin position="1"/>
        <end position="21"/>
    </location>
</feature>
<name>RL27_PARMW</name>
<organism>
    <name type="scientific">Parasynechococcus marenigrum (strain WH8102)</name>
    <dbReference type="NCBI Taxonomy" id="84588"/>
    <lineage>
        <taxon>Bacteria</taxon>
        <taxon>Bacillati</taxon>
        <taxon>Cyanobacteriota</taxon>
        <taxon>Cyanophyceae</taxon>
        <taxon>Synechococcales</taxon>
        <taxon>Prochlorococcaceae</taxon>
        <taxon>Parasynechococcus</taxon>
        <taxon>Parasynechococcus marenigrum</taxon>
    </lineage>
</organism>
<accession>Q7U8R7</accession>
<gene>
    <name evidence="1" type="primary">rpmA</name>
    <name evidence="1" type="synonym">rpl27</name>
    <name type="ordered locus">SYNW0546</name>
</gene>
<dbReference type="EMBL" id="BX569690">
    <property type="protein sequence ID" value="CAE07061.1"/>
    <property type="molecule type" value="Genomic_DNA"/>
</dbReference>
<dbReference type="RefSeq" id="WP_011127415.1">
    <property type="nucleotide sequence ID" value="NC_005070.1"/>
</dbReference>
<dbReference type="SMR" id="Q7U8R7"/>
<dbReference type="STRING" id="84588.SYNW0546"/>
<dbReference type="KEGG" id="syw:SYNW0546"/>
<dbReference type="eggNOG" id="COG0211">
    <property type="taxonomic scope" value="Bacteria"/>
</dbReference>
<dbReference type="HOGENOM" id="CLU_095424_4_0_3"/>
<dbReference type="Proteomes" id="UP000001422">
    <property type="component" value="Chromosome"/>
</dbReference>
<dbReference type="GO" id="GO:0022625">
    <property type="term" value="C:cytosolic large ribosomal subunit"/>
    <property type="evidence" value="ECO:0007669"/>
    <property type="project" value="TreeGrafter"/>
</dbReference>
<dbReference type="GO" id="GO:0003735">
    <property type="term" value="F:structural constituent of ribosome"/>
    <property type="evidence" value="ECO:0007669"/>
    <property type="project" value="InterPro"/>
</dbReference>
<dbReference type="GO" id="GO:0006412">
    <property type="term" value="P:translation"/>
    <property type="evidence" value="ECO:0007669"/>
    <property type="project" value="UniProtKB-UniRule"/>
</dbReference>
<dbReference type="FunFam" id="2.40.50.100:FF:000004">
    <property type="entry name" value="50S ribosomal protein L27"/>
    <property type="match status" value="1"/>
</dbReference>
<dbReference type="Gene3D" id="2.40.50.100">
    <property type="match status" value="1"/>
</dbReference>
<dbReference type="HAMAP" id="MF_00539">
    <property type="entry name" value="Ribosomal_bL27"/>
    <property type="match status" value="1"/>
</dbReference>
<dbReference type="InterPro" id="IPR001684">
    <property type="entry name" value="Ribosomal_bL27"/>
</dbReference>
<dbReference type="InterPro" id="IPR018261">
    <property type="entry name" value="Ribosomal_bL27_CS"/>
</dbReference>
<dbReference type="NCBIfam" id="TIGR00062">
    <property type="entry name" value="L27"/>
    <property type="match status" value="1"/>
</dbReference>
<dbReference type="PANTHER" id="PTHR15893:SF0">
    <property type="entry name" value="LARGE RIBOSOMAL SUBUNIT PROTEIN BL27M"/>
    <property type="match status" value="1"/>
</dbReference>
<dbReference type="PANTHER" id="PTHR15893">
    <property type="entry name" value="RIBOSOMAL PROTEIN L27"/>
    <property type="match status" value="1"/>
</dbReference>
<dbReference type="Pfam" id="PF01016">
    <property type="entry name" value="Ribosomal_L27"/>
    <property type="match status" value="1"/>
</dbReference>
<dbReference type="PRINTS" id="PR00063">
    <property type="entry name" value="RIBOSOMALL27"/>
</dbReference>
<dbReference type="SUPFAM" id="SSF110324">
    <property type="entry name" value="Ribosomal L27 protein-like"/>
    <property type="match status" value="1"/>
</dbReference>
<dbReference type="PROSITE" id="PS00831">
    <property type="entry name" value="RIBOSOMAL_L27"/>
    <property type="match status" value="1"/>
</dbReference>
<reference key="1">
    <citation type="journal article" date="2003" name="Nature">
        <title>The genome of a motile marine Synechococcus.</title>
        <authorList>
            <person name="Palenik B."/>
            <person name="Brahamsha B."/>
            <person name="Larimer F.W."/>
            <person name="Land M.L."/>
            <person name="Hauser L."/>
            <person name="Chain P."/>
            <person name="Lamerdin J.E."/>
            <person name="Regala W."/>
            <person name="Allen E.E."/>
            <person name="McCarren J."/>
            <person name="Paulsen I.T."/>
            <person name="Dufresne A."/>
            <person name="Partensky F."/>
            <person name="Webb E.A."/>
            <person name="Waterbury J."/>
        </authorList>
    </citation>
    <scope>NUCLEOTIDE SEQUENCE [LARGE SCALE GENOMIC DNA]</scope>
    <source>
        <strain>WH8102</strain>
    </source>
</reference>
<evidence type="ECO:0000255" key="1">
    <source>
        <dbReference type="HAMAP-Rule" id="MF_00539"/>
    </source>
</evidence>
<evidence type="ECO:0000256" key="2">
    <source>
        <dbReference type="SAM" id="MobiDB-lite"/>
    </source>
</evidence>
<evidence type="ECO:0000305" key="3"/>
<proteinExistence type="inferred from homology"/>
<keyword id="KW-0687">Ribonucleoprotein</keyword>
<keyword id="KW-0689">Ribosomal protein</keyword>
<sequence>MAHKKGTGSTRNGRDSNAKRLGVKAYGGETVTAGSILIRQRGTSVLPGINVGIGKDDTLFALTAGVVKFETIRRGLRNRKRINITAAV</sequence>
<protein>
    <recommendedName>
        <fullName evidence="1">Large ribosomal subunit protein bL27</fullName>
    </recommendedName>
    <alternativeName>
        <fullName evidence="3">50S ribosomal protein L27</fullName>
    </alternativeName>
</protein>
<comment type="similarity">
    <text evidence="1">Belongs to the bacterial ribosomal protein bL27 family.</text>
</comment>